<keyword id="KW-0028">Amino-acid biosynthesis</keyword>
<keyword id="KW-0368">Histidine biosynthesis</keyword>
<keyword id="KW-0378">Hydrolase</keyword>
<keyword id="KW-0486">Methionine biosynthesis</keyword>
<keyword id="KW-0511">Multifunctional enzyme</keyword>
<keyword id="KW-0521">NADP</keyword>
<keyword id="KW-0554">One-carbon metabolism</keyword>
<keyword id="KW-0560">Oxidoreductase</keyword>
<keyword id="KW-0658">Purine biosynthesis</keyword>
<gene>
    <name evidence="1" type="primary">folD</name>
    <name type="ordered locus">Mbar_A2315</name>
</gene>
<comment type="function">
    <text evidence="1">Catalyzes the oxidation of 5,10-methylenetetrahydrofolate to 5,10-methenyltetrahydrofolate and then the hydrolysis of 5,10-methenyltetrahydrofolate to 10-formyltetrahydrofolate.</text>
</comment>
<comment type="catalytic activity">
    <reaction evidence="1">
        <text>(6R)-5,10-methylene-5,6,7,8-tetrahydrofolate + NADP(+) = (6R)-5,10-methenyltetrahydrofolate + NADPH</text>
        <dbReference type="Rhea" id="RHEA:22812"/>
        <dbReference type="ChEBI" id="CHEBI:15636"/>
        <dbReference type="ChEBI" id="CHEBI:57455"/>
        <dbReference type="ChEBI" id="CHEBI:57783"/>
        <dbReference type="ChEBI" id="CHEBI:58349"/>
        <dbReference type="EC" id="1.5.1.5"/>
    </reaction>
</comment>
<comment type="catalytic activity">
    <reaction evidence="1">
        <text>(6R)-5,10-methenyltetrahydrofolate + H2O = (6R)-10-formyltetrahydrofolate + H(+)</text>
        <dbReference type="Rhea" id="RHEA:23700"/>
        <dbReference type="ChEBI" id="CHEBI:15377"/>
        <dbReference type="ChEBI" id="CHEBI:15378"/>
        <dbReference type="ChEBI" id="CHEBI:57455"/>
        <dbReference type="ChEBI" id="CHEBI:195366"/>
        <dbReference type="EC" id="3.5.4.9"/>
    </reaction>
</comment>
<comment type="pathway">
    <text evidence="1">One-carbon metabolism; tetrahydrofolate interconversion.</text>
</comment>
<comment type="subunit">
    <text evidence="1">Homodimer.</text>
</comment>
<comment type="similarity">
    <text evidence="1">Belongs to the tetrahydrofolate dehydrogenase/cyclohydrolase family.</text>
</comment>
<feature type="chain" id="PRO_0000268584" description="Bifunctional protein FolD">
    <location>
        <begin position="1"/>
        <end position="287"/>
    </location>
</feature>
<feature type="binding site" evidence="1">
    <location>
        <begin position="171"/>
        <end position="173"/>
    </location>
    <ligand>
        <name>NADP(+)</name>
        <dbReference type="ChEBI" id="CHEBI:58349"/>
    </ligand>
</feature>
<feature type="binding site" evidence="1">
    <location>
        <position position="237"/>
    </location>
    <ligand>
        <name>NADP(+)</name>
        <dbReference type="ChEBI" id="CHEBI:58349"/>
    </ligand>
</feature>
<sequence>MLDEGYESRIIDGKVLAKKIEDEVRSGVEALVSGRGITPGLATVLVGDDPASKMYVRLKHRACERVGIQAEDHFLPAETSQEELISLINTLNKDQNVHGILLQLPLPKHLFPQEAMEAIAPEKDADGFHPYNMGKLMIGDEGLVPCTPHGVIRALEEYNVPVKGKNVVIVGHSNVVGKPLAAMFLNRNATVSVCHVFTDDLKKYTLDADILVVATGVKHLIKADMVKEGAVIFDVGITKEKDGVYGDVDFENVIKKAALITPVPGGVGPLTVAMLMKHVLGCAETNY</sequence>
<organism>
    <name type="scientific">Methanosarcina barkeri (strain Fusaro / DSM 804)</name>
    <dbReference type="NCBI Taxonomy" id="269797"/>
    <lineage>
        <taxon>Archaea</taxon>
        <taxon>Methanobacteriati</taxon>
        <taxon>Methanobacteriota</taxon>
        <taxon>Stenosarchaea group</taxon>
        <taxon>Methanomicrobia</taxon>
        <taxon>Methanosarcinales</taxon>
        <taxon>Methanosarcinaceae</taxon>
        <taxon>Methanosarcina</taxon>
    </lineage>
</organism>
<accession>Q46A53</accession>
<name>FOLD_METBF</name>
<evidence type="ECO:0000255" key="1">
    <source>
        <dbReference type="HAMAP-Rule" id="MF_01576"/>
    </source>
</evidence>
<dbReference type="EC" id="1.5.1.5" evidence="1"/>
<dbReference type="EC" id="3.5.4.9" evidence="1"/>
<dbReference type="EMBL" id="CP000099">
    <property type="protein sequence ID" value="AAZ71239.1"/>
    <property type="molecule type" value="Genomic_DNA"/>
</dbReference>
<dbReference type="SMR" id="Q46A53"/>
<dbReference type="STRING" id="269797.Mbar_A2315"/>
<dbReference type="PaxDb" id="269797-Mbar_A2315"/>
<dbReference type="KEGG" id="mba:Mbar_A2315"/>
<dbReference type="eggNOG" id="arCOG04538">
    <property type="taxonomic scope" value="Archaea"/>
</dbReference>
<dbReference type="HOGENOM" id="CLU_034045_2_1_2"/>
<dbReference type="OrthoDB" id="9455at2157"/>
<dbReference type="BRENDA" id="1.5.1.15">
    <property type="organism ID" value="3250"/>
</dbReference>
<dbReference type="BRENDA" id="3.5.4.9">
    <property type="organism ID" value="3250"/>
</dbReference>
<dbReference type="UniPathway" id="UPA00193"/>
<dbReference type="GO" id="GO:0005829">
    <property type="term" value="C:cytosol"/>
    <property type="evidence" value="ECO:0007669"/>
    <property type="project" value="TreeGrafter"/>
</dbReference>
<dbReference type="GO" id="GO:0004477">
    <property type="term" value="F:methenyltetrahydrofolate cyclohydrolase activity"/>
    <property type="evidence" value="ECO:0007669"/>
    <property type="project" value="UniProtKB-UniRule"/>
</dbReference>
<dbReference type="GO" id="GO:0004488">
    <property type="term" value="F:methylenetetrahydrofolate dehydrogenase (NADP+) activity"/>
    <property type="evidence" value="ECO:0007669"/>
    <property type="project" value="UniProtKB-UniRule"/>
</dbReference>
<dbReference type="GO" id="GO:0000105">
    <property type="term" value="P:L-histidine biosynthetic process"/>
    <property type="evidence" value="ECO:0007669"/>
    <property type="project" value="UniProtKB-KW"/>
</dbReference>
<dbReference type="GO" id="GO:0009086">
    <property type="term" value="P:methionine biosynthetic process"/>
    <property type="evidence" value="ECO:0007669"/>
    <property type="project" value="UniProtKB-KW"/>
</dbReference>
<dbReference type="GO" id="GO:0006164">
    <property type="term" value="P:purine nucleotide biosynthetic process"/>
    <property type="evidence" value="ECO:0007669"/>
    <property type="project" value="UniProtKB-KW"/>
</dbReference>
<dbReference type="GO" id="GO:0035999">
    <property type="term" value="P:tetrahydrofolate interconversion"/>
    <property type="evidence" value="ECO:0007669"/>
    <property type="project" value="UniProtKB-UniRule"/>
</dbReference>
<dbReference type="CDD" id="cd01080">
    <property type="entry name" value="NAD_bind_m-THF_DH_Cyclohyd"/>
    <property type="match status" value="1"/>
</dbReference>
<dbReference type="FunFam" id="3.40.50.720:FF:000094">
    <property type="entry name" value="Bifunctional protein FolD"/>
    <property type="match status" value="1"/>
</dbReference>
<dbReference type="FunFam" id="3.40.50.10860:FF:000005">
    <property type="entry name" value="C-1-tetrahydrofolate synthase, cytoplasmic, putative"/>
    <property type="match status" value="1"/>
</dbReference>
<dbReference type="Gene3D" id="3.40.50.10860">
    <property type="entry name" value="Leucine Dehydrogenase, chain A, domain 1"/>
    <property type="match status" value="1"/>
</dbReference>
<dbReference type="Gene3D" id="3.40.50.720">
    <property type="entry name" value="NAD(P)-binding Rossmann-like Domain"/>
    <property type="match status" value="1"/>
</dbReference>
<dbReference type="HAMAP" id="MF_01576">
    <property type="entry name" value="THF_DHG_CYH"/>
    <property type="match status" value="1"/>
</dbReference>
<dbReference type="InterPro" id="IPR046346">
    <property type="entry name" value="Aminoacid_DH-like_N_sf"/>
</dbReference>
<dbReference type="InterPro" id="IPR036291">
    <property type="entry name" value="NAD(P)-bd_dom_sf"/>
</dbReference>
<dbReference type="InterPro" id="IPR000672">
    <property type="entry name" value="THF_DH/CycHdrlase"/>
</dbReference>
<dbReference type="InterPro" id="IPR020630">
    <property type="entry name" value="THF_DH/CycHdrlase_cat_dom"/>
</dbReference>
<dbReference type="InterPro" id="IPR020867">
    <property type="entry name" value="THF_DH/CycHdrlase_CS"/>
</dbReference>
<dbReference type="InterPro" id="IPR020631">
    <property type="entry name" value="THF_DH/CycHdrlase_NAD-bd_dom"/>
</dbReference>
<dbReference type="NCBIfam" id="NF010773">
    <property type="entry name" value="PRK14176.1"/>
    <property type="match status" value="1"/>
</dbReference>
<dbReference type="NCBIfam" id="NF010783">
    <property type="entry name" value="PRK14186.1"/>
    <property type="match status" value="1"/>
</dbReference>
<dbReference type="PANTHER" id="PTHR48099:SF5">
    <property type="entry name" value="C-1-TETRAHYDROFOLATE SYNTHASE, CYTOPLASMIC"/>
    <property type="match status" value="1"/>
</dbReference>
<dbReference type="PANTHER" id="PTHR48099">
    <property type="entry name" value="C-1-TETRAHYDROFOLATE SYNTHASE, CYTOPLASMIC-RELATED"/>
    <property type="match status" value="1"/>
</dbReference>
<dbReference type="Pfam" id="PF00763">
    <property type="entry name" value="THF_DHG_CYH"/>
    <property type="match status" value="1"/>
</dbReference>
<dbReference type="Pfam" id="PF02882">
    <property type="entry name" value="THF_DHG_CYH_C"/>
    <property type="match status" value="1"/>
</dbReference>
<dbReference type="PRINTS" id="PR00085">
    <property type="entry name" value="THFDHDRGNASE"/>
</dbReference>
<dbReference type="SUPFAM" id="SSF53223">
    <property type="entry name" value="Aminoacid dehydrogenase-like, N-terminal domain"/>
    <property type="match status" value="1"/>
</dbReference>
<dbReference type="SUPFAM" id="SSF51735">
    <property type="entry name" value="NAD(P)-binding Rossmann-fold domains"/>
    <property type="match status" value="1"/>
</dbReference>
<dbReference type="PROSITE" id="PS00766">
    <property type="entry name" value="THF_DHG_CYH_1"/>
    <property type="match status" value="1"/>
</dbReference>
<protein>
    <recommendedName>
        <fullName evidence="1">Bifunctional protein FolD</fullName>
    </recommendedName>
    <domain>
        <recommendedName>
            <fullName evidence="1">Methylenetetrahydrofolate dehydrogenase</fullName>
            <ecNumber evidence="1">1.5.1.5</ecNumber>
        </recommendedName>
    </domain>
    <domain>
        <recommendedName>
            <fullName evidence="1">Methenyltetrahydrofolate cyclohydrolase</fullName>
            <ecNumber evidence="1">3.5.4.9</ecNumber>
        </recommendedName>
    </domain>
</protein>
<reference key="1">
    <citation type="journal article" date="2006" name="J. Bacteriol.">
        <title>The Methanosarcina barkeri genome: comparative analysis with Methanosarcina acetivorans and Methanosarcina mazei reveals extensive rearrangement within methanosarcinal genomes.</title>
        <authorList>
            <person name="Maeder D.L."/>
            <person name="Anderson I."/>
            <person name="Brettin T.S."/>
            <person name="Bruce D.C."/>
            <person name="Gilna P."/>
            <person name="Han C.S."/>
            <person name="Lapidus A."/>
            <person name="Metcalf W.W."/>
            <person name="Saunders E."/>
            <person name="Tapia R."/>
            <person name="Sowers K.R."/>
        </authorList>
    </citation>
    <scope>NUCLEOTIDE SEQUENCE [LARGE SCALE GENOMIC DNA]</scope>
    <source>
        <strain>Fusaro / DSM 804</strain>
    </source>
</reference>
<proteinExistence type="inferred from homology"/>